<feature type="chain" id="PRO_0000179039" description="GTPase Der">
    <location>
        <begin position="1"/>
        <end position="490"/>
    </location>
</feature>
<feature type="domain" description="EngA-type G 1">
    <location>
        <begin position="3"/>
        <end position="166"/>
    </location>
</feature>
<feature type="domain" description="EngA-type G 2">
    <location>
        <begin position="203"/>
        <end position="376"/>
    </location>
</feature>
<feature type="domain" description="KH-like" evidence="1">
    <location>
        <begin position="377"/>
        <end position="461"/>
    </location>
</feature>
<feature type="binding site" evidence="1">
    <location>
        <begin position="9"/>
        <end position="16"/>
    </location>
    <ligand>
        <name>GTP</name>
        <dbReference type="ChEBI" id="CHEBI:37565"/>
        <label>1</label>
    </ligand>
</feature>
<feature type="binding site" evidence="1">
    <location>
        <begin position="56"/>
        <end position="60"/>
    </location>
    <ligand>
        <name>GTP</name>
        <dbReference type="ChEBI" id="CHEBI:37565"/>
        <label>1</label>
    </ligand>
</feature>
<feature type="binding site" evidence="1">
    <location>
        <begin position="118"/>
        <end position="121"/>
    </location>
    <ligand>
        <name>GTP</name>
        <dbReference type="ChEBI" id="CHEBI:37565"/>
        <label>1</label>
    </ligand>
</feature>
<feature type="binding site" evidence="1">
    <location>
        <begin position="209"/>
        <end position="216"/>
    </location>
    <ligand>
        <name>GTP</name>
        <dbReference type="ChEBI" id="CHEBI:37565"/>
        <label>2</label>
    </ligand>
</feature>
<feature type="binding site" evidence="1">
    <location>
        <begin position="256"/>
        <end position="260"/>
    </location>
    <ligand>
        <name>GTP</name>
        <dbReference type="ChEBI" id="CHEBI:37565"/>
        <label>2</label>
    </ligand>
</feature>
<feature type="binding site" evidence="1">
    <location>
        <begin position="321"/>
        <end position="324"/>
    </location>
    <ligand>
        <name>GTP</name>
        <dbReference type="ChEBI" id="CHEBI:37565"/>
        <label>2</label>
    </ligand>
</feature>
<accession>Q8Z4P6</accession>
<dbReference type="EMBL" id="AL513382">
    <property type="protein sequence ID" value="CAD02722.1"/>
    <property type="molecule type" value="Genomic_DNA"/>
</dbReference>
<dbReference type="EMBL" id="AE014613">
    <property type="protein sequence ID" value="AAO68060.1"/>
    <property type="molecule type" value="Genomic_DNA"/>
</dbReference>
<dbReference type="RefSeq" id="NP_457051.1">
    <property type="nucleotide sequence ID" value="NC_003198.1"/>
</dbReference>
<dbReference type="RefSeq" id="WP_000249413.1">
    <property type="nucleotide sequence ID" value="NZ_WSUR01000007.1"/>
</dbReference>
<dbReference type="SMR" id="Q8Z4P6"/>
<dbReference type="STRING" id="220341.gene:17586656"/>
<dbReference type="KEGG" id="stt:t0337"/>
<dbReference type="KEGG" id="sty:STY2764"/>
<dbReference type="PATRIC" id="fig|220341.7.peg.2806"/>
<dbReference type="eggNOG" id="COG1160">
    <property type="taxonomic scope" value="Bacteria"/>
</dbReference>
<dbReference type="HOGENOM" id="CLU_016077_6_2_6"/>
<dbReference type="OMA" id="CNLPQYV"/>
<dbReference type="OrthoDB" id="9805918at2"/>
<dbReference type="Proteomes" id="UP000000541">
    <property type="component" value="Chromosome"/>
</dbReference>
<dbReference type="Proteomes" id="UP000002670">
    <property type="component" value="Chromosome"/>
</dbReference>
<dbReference type="GO" id="GO:0005525">
    <property type="term" value="F:GTP binding"/>
    <property type="evidence" value="ECO:0007669"/>
    <property type="project" value="UniProtKB-UniRule"/>
</dbReference>
<dbReference type="GO" id="GO:0043022">
    <property type="term" value="F:ribosome binding"/>
    <property type="evidence" value="ECO:0007669"/>
    <property type="project" value="TreeGrafter"/>
</dbReference>
<dbReference type="GO" id="GO:0042254">
    <property type="term" value="P:ribosome biogenesis"/>
    <property type="evidence" value="ECO:0007669"/>
    <property type="project" value="UniProtKB-KW"/>
</dbReference>
<dbReference type="CDD" id="cd01894">
    <property type="entry name" value="EngA1"/>
    <property type="match status" value="1"/>
</dbReference>
<dbReference type="CDD" id="cd01895">
    <property type="entry name" value="EngA2"/>
    <property type="match status" value="1"/>
</dbReference>
<dbReference type="FunFam" id="3.30.300.20:FF:000004">
    <property type="entry name" value="GTPase Der"/>
    <property type="match status" value="1"/>
</dbReference>
<dbReference type="FunFam" id="3.40.50.300:FF:000040">
    <property type="entry name" value="GTPase Der"/>
    <property type="match status" value="1"/>
</dbReference>
<dbReference type="FunFam" id="3.40.50.300:FF:000057">
    <property type="entry name" value="GTPase Der"/>
    <property type="match status" value="1"/>
</dbReference>
<dbReference type="Gene3D" id="3.30.300.20">
    <property type="match status" value="1"/>
</dbReference>
<dbReference type="Gene3D" id="3.40.50.300">
    <property type="entry name" value="P-loop containing nucleotide triphosphate hydrolases"/>
    <property type="match status" value="2"/>
</dbReference>
<dbReference type="HAMAP" id="MF_00195">
    <property type="entry name" value="GTPase_Der"/>
    <property type="match status" value="1"/>
</dbReference>
<dbReference type="InterPro" id="IPR031166">
    <property type="entry name" value="G_ENGA"/>
</dbReference>
<dbReference type="InterPro" id="IPR006073">
    <property type="entry name" value="GTP-bd"/>
</dbReference>
<dbReference type="InterPro" id="IPR016484">
    <property type="entry name" value="GTPase_Der"/>
</dbReference>
<dbReference type="InterPro" id="IPR032859">
    <property type="entry name" value="KH_dom-like"/>
</dbReference>
<dbReference type="InterPro" id="IPR015946">
    <property type="entry name" value="KH_dom-like_a/b"/>
</dbReference>
<dbReference type="InterPro" id="IPR027417">
    <property type="entry name" value="P-loop_NTPase"/>
</dbReference>
<dbReference type="InterPro" id="IPR005225">
    <property type="entry name" value="Small_GTP-bd"/>
</dbReference>
<dbReference type="NCBIfam" id="TIGR03594">
    <property type="entry name" value="GTPase_EngA"/>
    <property type="match status" value="1"/>
</dbReference>
<dbReference type="NCBIfam" id="TIGR00231">
    <property type="entry name" value="small_GTP"/>
    <property type="match status" value="2"/>
</dbReference>
<dbReference type="PANTHER" id="PTHR43834">
    <property type="entry name" value="GTPASE DER"/>
    <property type="match status" value="1"/>
</dbReference>
<dbReference type="PANTHER" id="PTHR43834:SF6">
    <property type="entry name" value="GTPASE DER"/>
    <property type="match status" value="1"/>
</dbReference>
<dbReference type="Pfam" id="PF14714">
    <property type="entry name" value="KH_dom-like"/>
    <property type="match status" value="1"/>
</dbReference>
<dbReference type="Pfam" id="PF01926">
    <property type="entry name" value="MMR_HSR1"/>
    <property type="match status" value="2"/>
</dbReference>
<dbReference type="PIRSF" id="PIRSF006485">
    <property type="entry name" value="GTP-binding_EngA"/>
    <property type="match status" value="1"/>
</dbReference>
<dbReference type="PRINTS" id="PR00326">
    <property type="entry name" value="GTP1OBG"/>
</dbReference>
<dbReference type="SUPFAM" id="SSF52540">
    <property type="entry name" value="P-loop containing nucleoside triphosphate hydrolases"/>
    <property type="match status" value="2"/>
</dbReference>
<dbReference type="PROSITE" id="PS51712">
    <property type="entry name" value="G_ENGA"/>
    <property type="match status" value="2"/>
</dbReference>
<protein>
    <recommendedName>
        <fullName evidence="1">GTPase Der</fullName>
    </recommendedName>
    <alternativeName>
        <fullName evidence="1">GTP-binding protein EngA</fullName>
    </alternativeName>
</protein>
<proteinExistence type="inferred from homology"/>
<organism>
    <name type="scientific">Salmonella typhi</name>
    <dbReference type="NCBI Taxonomy" id="90370"/>
    <lineage>
        <taxon>Bacteria</taxon>
        <taxon>Pseudomonadati</taxon>
        <taxon>Pseudomonadota</taxon>
        <taxon>Gammaproteobacteria</taxon>
        <taxon>Enterobacterales</taxon>
        <taxon>Enterobacteriaceae</taxon>
        <taxon>Salmonella</taxon>
    </lineage>
</organism>
<name>DER_SALTI</name>
<sequence length="490" mass="55002">MVPVVALVGRPNVGKSTLFNRLTRTRDALVADFPGLTRDRKYGRAEVEGREFICIDTGGIDGTEDGVETRMAEQSLLAIEEADVVLFMVDARAGLMPADEAIAKHLRSREKPTFLVANKTDGLDPDQAVVDFYSLGLGEIYPIAASHGRGVLSLLEHVLLPWMDDVAPQEEVDEDAEYWAQFEAEQNGEEAPEDDFDPQSLPIKLAIVGRPNVGKSTLTNRILGEERVVVYDMPGTTRDSIYIPMERDEREYVLIDTAGVRKRGKITDAVEKFSVIKTLQAIEDANVVLLVIDAREGISDQDLSLLGFILNSGRSLVIVVNKWDGLSQEVKEQVKETLDFRLGFIDFARVHFISALHGSGVGNLFESVREAYDSSTRRVSTAMLTRIMTMAVEDHQPPLVRGRRVKLKYAHTGGYNPPIVVIHGNQVKDLPDSYKRYLMNYFRKSLEVMGTPIRIQFKEGENPYANKRNTLTPTQMRKRKRLMKHIKKSK</sequence>
<reference key="1">
    <citation type="journal article" date="2001" name="Nature">
        <title>Complete genome sequence of a multiple drug resistant Salmonella enterica serovar Typhi CT18.</title>
        <authorList>
            <person name="Parkhill J."/>
            <person name="Dougan G."/>
            <person name="James K.D."/>
            <person name="Thomson N.R."/>
            <person name="Pickard D."/>
            <person name="Wain J."/>
            <person name="Churcher C.M."/>
            <person name="Mungall K.L."/>
            <person name="Bentley S.D."/>
            <person name="Holden M.T.G."/>
            <person name="Sebaihia M."/>
            <person name="Baker S."/>
            <person name="Basham D."/>
            <person name="Brooks K."/>
            <person name="Chillingworth T."/>
            <person name="Connerton P."/>
            <person name="Cronin A."/>
            <person name="Davis P."/>
            <person name="Davies R.M."/>
            <person name="Dowd L."/>
            <person name="White N."/>
            <person name="Farrar J."/>
            <person name="Feltwell T."/>
            <person name="Hamlin N."/>
            <person name="Haque A."/>
            <person name="Hien T.T."/>
            <person name="Holroyd S."/>
            <person name="Jagels K."/>
            <person name="Krogh A."/>
            <person name="Larsen T.S."/>
            <person name="Leather S."/>
            <person name="Moule S."/>
            <person name="O'Gaora P."/>
            <person name="Parry C."/>
            <person name="Quail M.A."/>
            <person name="Rutherford K.M."/>
            <person name="Simmonds M."/>
            <person name="Skelton J."/>
            <person name="Stevens K."/>
            <person name="Whitehead S."/>
            <person name="Barrell B.G."/>
        </authorList>
    </citation>
    <scope>NUCLEOTIDE SEQUENCE [LARGE SCALE GENOMIC DNA]</scope>
    <source>
        <strain>CT18</strain>
    </source>
</reference>
<reference key="2">
    <citation type="journal article" date="2003" name="J. Bacteriol.">
        <title>Comparative genomics of Salmonella enterica serovar Typhi strains Ty2 and CT18.</title>
        <authorList>
            <person name="Deng W."/>
            <person name="Liou S.-R."/>
            <person name="Plunkett G. III"/>
            <person name="Mayhew G.F."/>
            <person name="Rose D.J."/>
            <person name="Burland V."/>
            <person name="Kodoyianni V."/>
            <person name="Schwartz D.C."/>
            <person name="Blattner F.R."/>
        </authorList>
    </citation>
    <scope>NUCLEOTIDE SEQUENCE [LARGE SCALE GENOMIC DNA]</scope>
    <source>
        <strain>ATCC 700931 / Ty2</strain>
    </source>
</reference>
<evidence type="ECO:0000255" key="1">
    <source>
        <dbReference type="HAMAP-Rule" id="MF_00195"/>
    </source>
</evidence>
<gene>
    <name evidence="1" type="primary">der</name>
    <name type="synonym">engA</name>
    <name type="ordered locus">STY2764</name>
    <name type="ordered locus">t0337</name>
</gene>
<keyword id="KW-0342">GTP-binding</keyword>
<keyword id="KW-0547">Nucleotide-binding</keyword>
<keyword id="KW-0677">Repeat</keyword>
<keyword id="KW-0690">Ribosome biogenesis</keyword>
<comment type="function">
    <text evidence="1">GTPase that plays an essential role in the late steps of ribosome biogenesis.</text>
</comment>
<comment type="subunit">
    <text evidence="1">Associates with the 50S ribosomal subunit.</text>
</comment>
<comment type="similarity">
    <text evidence="1">Belongs to the TRAFAC class TrmE-Era-EngA-EngB-Septin-like GTPase superfamily. EngA (Der) GTPase family.</text>
</comment>